<keyword id="KW-0067">ATP-binding</keyword>
<keyword id="KW-0436">Ligase</keyword>
<keyword id="KW-0460">Magnesium</keyword>
<keyword id="KW-0464">Manganese</keyword>
<keyword id="KW-0479">Metal-binding</keyword>
<keyword id="KW-0547">Nucleotide-binding</keyword>
<keyword id="KW-0658">Purine biosynthesis</keyword>
<protein>
    <recommendedName>
        <fullName evidence="2">Phosphoribosylamine--glycine ligase</fullName>
        <ecNumber evidence="2">6.3.4.13</ecNumber>
    </recommendedName>
    <alternativeName>
        <fullName evidence="2">GARS</fullName>
    </alternativeName>
    <alternativeName>
        <fullName evidence="2">Glycinamide ribonucleotide synthetase</fullName>
    </alternativeName>
    <alternativeName>
        <fullName evidence="2">Phosphoribosylglycinamide synthetase</fullName>
    </alternativeName>
</protein>
<sequence length="438" mass="48748">MRVLLVGGGGREHAIGEALARGGAELYVVSKHKNPGLARISRDYGISKETDVEKVVRFARMWNVDLAFIGPEAPLEAGIVNALEREGIPTVGPTKEAARLETNKAWAREFMERNDIPGRKLFKVFDDVEEMKAWIDEYGKPVVVKPLGLTGGKGVKVVGYQLKDNEEAKEYAEYLIKKDGKVLIEERTDGVEFTFQVFSDGRNVIPMPLVQDYPHAYEGDVGPITGGMGSYSCSNHILPFITKEDWKMALRTLEETIKAMRKEGYPYKGILYGQFMLSREGPVIIEYNARFGDPEAINVLSILEDNLVEIAEGIVKGRVRGAKFQEKATVVKYLAPKGYPENPIRGAEIMVNEEAIKEEGAKIVYASVDENMKLLGSRALAMVGVADTLEEAEKIAEAGIRHVRGPVFYRKDVGTKESIEKRIRTMKELGKEFEPNSC</sequence>
<evidence type="ECO:0000250" key="1"/>
<evidence type="ECO:0000255" key="2">
    <source>
        <dbReference type="HAMAP-Rule" id="MF_00138"/>
    </source>
</evidence>
<proteinExistence type="inferred from homology"/>
<comment type="catalytic activity">
    <reaction evidence="2">
        <text>5-phospho-beta-D-ribosylamine + glycine + ATP = N(1)-(5-phospho-beta-D-ribosyl)glycinamide + ADP + phosphate + H(+)</text>
        <dbReference type="Rhea" id="RHEA:17453"/>
        <dbReference type="ChEBI" id="CHEBI:15378"/>
        <dbReference type="ChEBI" id="CHEBI:30616"/>
        <dbReference type="ChEBI" id="CHEBI:43474"/>
        <dbReference type="ChEBI" id="CHEBI:57305"/>
        <dbReference type="ChEBI" id="CHEBI:58681"/>
        <dbReference type="ChEBI" id="CHEBI:143788"/>
        <dbReference type="ChEBI" id="CHEBI:456216"/>
        <dbReference type="EC" id="6.3.4.13"/>
    </reaction>
</comment>
<comment type="cofactor">
    <cofactor evidence="1">
        <name>Mg(2+)</name>
        <dbReference type="ChEBI" id="CHEBI:18420"/>
    </cofactor>
    <cofactor evidence="1">
        <name>Mn(2+)</name>
        <dbReference type="ChEBI" id="CHEBI:29035"/>
    </cofactor>
    <text evidence="1">Binds 2 magnesium or manganese ions per subunit.</text>
</comment>
<comment type="pathway">
    <text evidence="2">Purine metabolism; IMP biosynthesis via de novo pathway; N(1)-(5-phospho-D-ribosyl)glycinamide from 5-phospho-alpha-D-ribose 1-diphosphate: step 2/2.</text>
</comment>
<comment type="similarity">
    <text evidence="2">Belongs to the GARS family.</text>
</comment>
<accession>Q9UY71</accession>
<accession>G8ZJZ1</accession>
<organism>
    <name type="scientific">Pyrococcus abyssi (strain GE5 / Orsay)</name>
    <dbReference type="NCBI Taxonomy" id="272844"/>
    <lineage>
        <taxon>Archaea</taxon>
        <taxon>Methanobacteriati</taxon>
        <taxon>Methanobacteriota</taxon>
        <taxon>Thermococci</taxon>
        <taxon>Thermococcales</taxon>
        <taxon>Thermococcaceae</taxon>
        <taxon>Pyrococcus</taxon>
    </lineage>
</organism>
<dbReference type="EC" id="6.3.4.13" evidence="2"/>
<dbReference type="EMBL" id="AJ248288">
    <property type="protein sequence ID" value="CAB50541.1"/>
    <property type="molecule type" value="Genomic_DNA"/>
</dbReference>
<dbReference type="EMBL" id="HE613800">
    <property type="protein sequence ID" value="CCE71098.1"/>
    <property type="molecule type" value="Genomic_DNA"/>
</dbReference>
<dbReference type="PIR" id="G75012">
    <property type="entry name" value="G75012"/>
</dbReference>
<dbReference type="RefSeq" id="WP_010868755.1">
    <property type="nucleotide sequence ID" value="NC_000868.1"/>
</dbReference>
<dbReference type="SMR" id="Q9UY71"/>
<dbReference type="STRING" id="272844.PAB1271"/>
<dbReference type="KEGG" id="pab:PAB1271"/>
<dbReference type="PATRIC" id="fig|272844.11.peg.1746"/>
<dbReference type="eggNOG" id="arCOG04415">
    <property type="taxonomic scope" value="Archaea"/>
</dbReference>
<dbReference type="HOGENOM" id="CLU_027420_3_0_2"/>
<dbReference type="OrthoDB" id="146558at2157"/>
<dbReference type="PhylomeDB" id="Q9UY71"/>
<dbReference type="UniPathway" id="UPA00074">
    <property type="reaction ID" value="UER00125"/>
</dbReference>
<dbReference type="Proteomes" id="UP000000810">
    <property type="component" value="Chromosome"/>
</dbReference>
<dbReference type="Proteomes" id="UP000009139">
    <property type="component" value="Chromosome"/>
</dbReference>
<dbReference type="GO" id="GO:0005524">
    <property type="term" value="F:ATP binding"/>
    <property type="evidence" value="ECO:0007669"/>
    <property type="project" value="UniProtKB-KW"/>
</dbReference>
<dbReference type="GO" id="GO:0046872">
    <property type="term" value="F:metal ion binding"/>
    <property type="evidence" value="ECO:0007669"/>
    <property type="project" value="UniProtKB-KW"/>
</dbReference>
<dbReference type="GO" id="GO:0004637">
    <property type="term" value="F:phosphoribosylamine-glycine ligase activity"/>
    <property type="evidence" value="ECO:0007669"/>
    <property type="project" value="UniProtKB-UniRule"/>
</dbReference>
<dbReference type="GO" id="GO:0006189">
    <property type="term" value="P:'de novo' IMP biosynthetic process"/>
    <property type="evidence" value="ECO:0007669"/>
    <property type="project" value="UniProtKB-UniRule"/>
</dbReference>
<dbReference type="GO" id="GO:0009113">
    <property type="term" value="P:purine nucleobase biosynthetic process"/>
    <property type="evidence" value="ECO:0007669"/>
    <property type="project" value="InterPro"/>
</dbReference>
<dbReference type="Gene3D" id="3.40.50.20">
    <property type="match status" value="1"/>
</dbReference>
<dbReference type="Gene3D" id="3.30.1490.20">
    <property type="entry name" value="ATP-grasp fold, A domain"/>
    <property type="match status" value="1"/>
</dbReference>
<dbReference type="Gene3D" id="3.30.470.20">
    <property type="entry name" value="ATP-grasp fold, B domain"/>
    <property type="match status" value="1"/>
</dbReference>
<dbReference type="Gene3D" id="3.90.600.10">
    <property type="entry name" value="Phosphoribosylglycinamide synthetase, C-terminal domain"/>
    <property type="match status" value="1"/>
</dbReference>
<dbReference type="HAMAP" id="MF_00138">
    <property type="entry name" value="GARS"/>
    <property type="match status" value="1"/>
</dbReference>
<dbReference type="InterPro" id="IPR011761">
    <property type="entry name" value="ATP-grasp"/>
</dbReference>
<dbReference type="InterPro" id="IPR013815">
    <property type="entry name" value="ATP_grasp_subdomain_1"/>
</dbReference>
<dbReference type="InterPro" id="IPR016185">
    <property type="entry name" value="PreATP-grasp_dom_sf"/>
</dbReference>
<dbReference type="InterPro" id="IPR020561">
    <property type="entry name" value="PRibGlycinamid_synth_ATP-grasp"/>
</dbReference>
<dbReference type="InterPro" id="IPR000115">
    <property type="entry name" value="PRibGlycinamide_synth"/>
</dbReference>
<dbReference type="InterPro" id="IPR020560">
    <property type="entry name" value="PRibGlycinamide_synth_C-dom"/>
</dbReference>
<dbReference type="InterPro" id="IPR037123">
    <property type="entry name" value="PRibGlycinamide_synth_C_sf"/>
</dbReference>
<dbReference type="InterPro" id="IPR020559">
    <property type="entry name" value="PRibGlycinamide_synth_CS"/>
</dbReference>
<dbReference type="InterPro" id="IPR020562">
    <property type="entry name" value="PRibGlycinamide_synth_N"/>
</dbReference>
<dbReference type="InterPro" id="IPR011054">
    <property type="entry name" value="Rudment_hybrid_motif"/>
</dbReference>
<dbReference type="NCBIfam" id="TIGR00877">
    <property type="entry name" value="purD"/>
    <property type="match status" value="1"/>
</dbReference>
<dbReference type="PANTHER" id="PTHR43472">
    <property type="entry name" value="PHOSPHORIBOSYLAMINE--GLYCINE LIGASE"/>
    <property type="match status" value="1"/>
</dbReference>
<dbReference type="PANTHER" id="PTHR43472:SF1">
    <property type="entry name" value="PHOSPHORIBOSYLAMINE--GLYCINE LIGASE, CHLOROPLASTIC"/>
    <property type="match status" value="1"/>
</dbReference>
<dbReference type="Pfam" id="PF01071">
    <property type="entry name" value="GARS_A"/>
    <property type="match status" value="1"/>
</dbReference>
<dbReference type="Pfam" id="PF02843">
    <property type="entry name" value="GARS_C"/>
    <property type="match status" value="1"/>
</dbReference>
<dbReference type="Pfam" id="PF02844">
    <property type="entry name" value="GARS_N"/>
    <property type="match status" value="1"/>
</dbReference>
<dbReference type="SMART" id="SM01209">
    <property type="entry name" value="GARS_A"/>
    <property type="match status" value="1"/>
</dbReference>
<dbReference type="SMART" id="SM01210">
    <property type="entry name" value="GARS_C"/>
    <property type="match status" value="1"/>
</dbReference>
<dbReference type="SUPFAM" id="SSF56059">
    <property type="entry name" value="Glutathione synthetase ATP-binding domain-like"/>
    <property type="match status" value="1"/>
</dbReference>
<dbReference type="SUPFAM" id="SSF52440">
    <property type="entry name" value="PreATP-grasp domain"/>
    <property type="match status" value="1"/>
</dbReference>
<dbReference type="SUPFAM" id="SSF51246">
    <property type="entry name" value="Rudiment single hybrid motif"/>
    <property type="match status" value="1"/>
</dbReference>
<dbReference type="PROSITE" id="PS50975">
    <property type="entry name" value="ATP_GRASP"/>
    <property type="match status" value="1"/>
</dbReference>
<dbReference type="PROSITE" id="PS00184">
    <property type="entry name" value="GARS"/>
    <property type="match status" value="1"/>
</dbReference>
<reference key="1">
    <citation type="journal article" date="2003" name="Mol. Microbiol.">
        <title>An integrated analysis of the genome of the hyperthermophilic archaeon Pyrococcus abyssi.</title>
        <authorList>
            <person name="Cohen G.N."/>
            <person name="Barbe V."/>
            <person name="Flament D."/>
            <person name="Galperin M."/>
            <person name="Heilig R."/>
            <person name="Lecompte O."/>
            <person name="Poch O."/>
            <person name="Prieur D."/>
            <person name="Querellou J."/>
            <person name="Ripp R."/>
            <person name="Thierry J.-C."/>
            <person name="Van der Oost J."/>
            <person name="Weissenbach J."/>
            <person name="Zivanovic Y."/>
            <person name="Forterre P."/>
        </authorList>
    </citation>
    <scope>NUCLEOTIDE SEQUENCE [LARGE SCALE GENOMIC DNA]</scope>
    <source>
        <strain>GE5 / Orsay</strain>
    </source>
</reference>
<reference key="2">
    <citation type="journal article" date="2012" name="Curr. Microbiol.">
        <title>Re-annotation of two hyperthermophilic archaea Pyrococcus abyssi GE5 and Pyrococcus furiosus DSM 3638.</title>
        <authorList>
            <person name="Gao J."/>
            <person name="Wang J."/>
        </authorList>
    </citation>
    <scope>GENOME REANNOTATION</scope>
    <source>
        <strain>GE5 / Orsay</strain>
    </source>
</reference>
<gene>
    <name evidence="2" type="primary">purD</name>
    <name type="ordered locus">PYRAB16370</name>
    <name type="ORF">PAB1271</name>
</gene>
<name>PUR2_PYRAB</name>
<feature type="chain" id="PRO_0000151514" description="Phosphoribosylamine--glycine ligase">
    <location>
        <begin position="1"/>
        <end position="438"/>
    </location>
</feature>
<feature type="domain" description="ATP-grasp" evidence="2">
    <location>
        <begin position="108"/>
        <end position="316"/>
    </location>
</feature>
<feature type="binding site" evidence="2">
    <location>
        <begin position="135"/>
        <end position="194"/>
    </location>
    <ligand>
        <name>ATP</name>
        <dbReference type="ChEBI" id="CHEBI:30616"/>
    </ligand>
</feature>
<feature type="binding site" evidence="2">
    <location>
        <position position="274"/>
    </location>
    <ligand>
        <name>Mg(2+)</name>
        <dbReference type="ChEBI" id="CHEBI:18420"/>
        <label>1</label>
    </ligand>
</feature>
<feature type="binding site" evidence="2">
    <location>
        <position position="274"/>
    </location>
    <ligand>
        <name>Mn(2+)</name>
        <dbReference type="ChEBI" id="CHEBI:29035"/>
        <label>1</label>
    </ligand>
</feature>
<feature type="binding site" evidence="2">
    <location>
        <position position="286"/>
    </location>
    <ligand>
        <name>Mg(2+)</name>
        <dbReference type="ChEBI" id="CHEBI:18420"/>
        <label>1</label>
    </ligand>
</feature>
<feature type="binding site" evidence="2">
    <location>
        <position position="286"/>
    </location>
    <ligand>
        <name>Mg(2+)</name>
        <dbReference type="ChEBI" id="CHEBI:18420"/>
        <label>2</label>
    </ligand>
</feature>
<feature type="binding site" evidence="2">
    <location>
        <position position="286"/>
    </location>
    <ligand>
        <name>Mn(2+)</name>
        <dbReference type="ChEBI" id="CHEBI:29035"/>
        <label>1</label>
    </ligand>
</feature>
<feature type="binding site" evidence="2">
    <location>
        <position position="286"/>
    </location>
    <ligand>
        <name>Mn(2+)</name>
        <dbReference type="ChEBI" id="CHEBI:29035"/>
        <label>2</label>
    </ligand>
</feature>
<feature type="binding site" evidence="2">
    <location>
        <position position="288"/>
    </location>
    <ligand>
        <name>Mg(2+)</name>
        <dbReference type="ChEBI" id="CHEBI:18420"/>
        <label>2</label>
    </ligand>
</feature>
<feature type="binding site" evidence="2">
    <location>
        <position position="288"/>
    </location>
    <ligand>
        <name>Mn(2+)</name>
        <dbReference type="ChEBI" id="CHEBI:29035"/>
        <label>2</label>
    </ligand>
</feature>